<organism>
    <name type="scientific">Arabidopsis thaliana</name>
    <name type="common">Mouse-ear cress</name>
    <dbReference type="NCBI Taxonomy" id="3702"/>
    <lineage>
        <taxon>Eukaryota</taxon>
        <taxon>Viridiplantae</taxon>
        <taxon>Streptophyta</taxon>
        <taxon>Embryophyta</taxon>
        <taxon>Tracheophyta</taxon>
        <taxon>Spermatophyta</taxon>
        <taxon>Magnoliopsida</taxon>
        <taxon>eudicotyledons</taxon>
        <taxon>Gunneridae</taxon>
        <taxon>Pentapetalae</taxon>
        <taxon>rosids</taxon>
        <taxon>malvids</taxon>
        <taxon>Brassicales</taxon>
        <taxon>Brassicaceae</taxon>
        <taxon>Camelineae</taxon>
        <taxon>Arabidopsis</taxon>
    </lineage>
</organism>
<gene>
    <name type="primary">PCMP-H34</name>
    <name type="ordered locus">At3g26782</name>
    <name type="ORF">MDJ14.8</name>
</gene>
<sequence length="659" mass="73766">MKVRSKKALFCSVSRLLHTERHTERQNLTTLFNRYVDKTDVFSWNSVIADLARSGDSAEALLAFSSMRKLSLYPTRSSFPCAIKACSSLFDIFSGKQTHQQAFVFGYQSDIFVSSALIVMYSTCGKLEDARKVFDEIPKRNIVSWTSMIRGYDLNGNALDAVSLFKDLLVDENDDDDAMFLDSMGLVSVISACSRVPAKGLTESIHSFVIKRGFDRGVSVGNTLLDAYAKGGEGGVAVARKIFDQIVDKDRVSYNSIMSVYAQSGMSNEAFEVFRRLVKNKVVTFNAITLSTVLLAVSHSGALRIGKCIHDQVIRMGLEDDVIVGTSIIDMYCKCGRVETARKAFDRMKNKNVRSWTAMIAGYGMHGHAAKALELFPAMIDSGVRPNYITFVSVLAACSHAGLHVEGWRWFNAMKGRFGVEPGLEHYGCMVDLLGRAGFLQKAYDLIQRMKMKPDSIIWSSLLAACRIHKNVELAEISVARLFELDSSNCGYYMLLSHIYADAGRWKDVERVRMIMKNRGLVKPPGFSLLELNGEVHVFLIGDEEHPQREKIYEFLAELNRKLLEAGYVSNTSSVCHDVDEEEKEMTLRVHSEKLAIAFGIMNTVPGSTVNVVKNLRVCSDCHNVIKLISKIVDREFVVRDAKRFHHFKDGGCSCGDYW</sequence>
<protein>
    <recommendedName>
        <fullName>Pentatricopeptide repeat-containing protein At3g26782, mitochondrial</fullName>
    </recommendedName>
</protein>
<dbReference type="EMBL" id="AB016889">
    <property type="protein sequence ID" value="BAB01225.1"/>
    <property type="molecule type" value="Genomic_DNA"/>
</dbReference>
<dbReference type="EMBL" id="CP002686">
    <property type="protein sequence ID" value="AEE77215.1"/>
    <property type="molecule type" value="Genomic_DNA"/>
</dbReference>
<dbReference type="EMBL" id="AK228506">
    <property type="protein sequence ID" value="BAF00431.1"/>
    <property type="molecule type" value="mRNA"/>
</dbReference>
<dbReference type="RefSeq" id="NP_001078212.1">
    <property type="nucleotide sequence ID" value="NM_001084743.3"/>
</dbReference>
<dbReference type="SMR" id="Q9LW32"/>
<dbReference type="FunCoup" id="Q9LW32">
    <property type="interactions" value="177"/>
</dbReference>
<dbReference type="PaxDb" id="3702-AT3G26782.1"/>
<dbReference type="ProteomicsDB" id="249106"/>
<dbReference type="EnsemblPlants" id="AT3G26782.1">
    <property type="protein sequence ID" value="AT3G26782.1"/>
    <property type="gene ID" value="AT3G26782"/>
</dbReference>
<dbReference type="GeneID" id="5008030"/>
<dbReference type="Gramene" id="AT3G26782.1">
    <property type="protein sequence ID" value="AT3G26782.1"/>
    <property type="gene ID" value="AT3G26782"/>
</dbReference>
<dbReference type="KEGG" id="ath:AT3G26782"/>
<dbReference type="Araport" id="AT3G26782"/>
<dbReference type="TAIR" id="AT3G26782"/>
<dbReference type="eggNOG" id="KOG4197">
    <property type="taxonomic scope" value="Eukaryota"/>
</dbReference>
<dbReference type="HOGENOM" id="CLU_002706_15_1_1"/>
<dbReference type="InParanoid" id="Q9LW32"/>
<dbReference type="OMA" id="HMYHHCS"/>
<dbReference type="OrthoDB" id="185373at2759"/>
<dbReference type="PhylomeDB" id="Q9LW32"/>
<dbReference type="PRO" id="PR:Q9LW32"/>
<dbReference type="Proteomes" id="UP000006548">
    <property type="component" value="Chromosome 3"/>
</dbReference>
<dbReference type="ExpressionAtlas" id="Q9LW32">
    <property type="expression patterns" value="baseline and differential"/>
</dbReference>
<dbReference type="GO" id="GO:0005739">
    <property type="term" value="C:mitochondrion"/>
    <property type="evidence" value="ECO:0007005"/>
    <property type="project" value="TAIR"/>
</dbReference>
<dbReference type="GO" id="GO:0003723">
    <property type="term" value="F:RNA binding"/>
    <property type="evidence" value="ECO:0007669"/>
    <property type="project" value="InterPro"/>
</dbReference>
<dbReference type="GO" id="GO:0008270">
    <property type="term" value="F:zinc ion binding"/>
    <property type="evidence" value="ECO:0007669"/>
    <property type="project" value="InterPro"/>
</dbReference>
<dbReference type="GO" id="GO:0009451">
    <property type="term" value="P:RNA modification"/>
    <property type="evidence" value="ECO:0007669"/>
    <property type="project" value="InterPro"/>
</dbReference>
<dbReference type="FunFam" id="1.25.40.10:FF:000366">
    <property type="entry name" value="Pentatricopeptide (PPR) repeat-containing protein"/>
    <property type="match status" value="1"/>
</dbReference>
<dbReference type="FunFam" id="1.25.40.10:FF:001386">
    <property type="entry name" value="Pentatricopeptide repeat-containing protein At3g26782, mitochondrial"/>
    <property type="match status" value="1"/>
</dbReference>
<dbReference type="FunFam" id="1.25.40.10:FF:000031">
    <property type="entry name" value="Pentatricopeptide repeat-containing protein mitochondrial"/>
    <property type="match status" value="1"/>
</dbReference>
<dbReference type="FunFam" id="1.25.40.10:FF:000968">
    <property type="entry name" value="Pentatricopeptide repeat-containing protein, mitochondrial"/>
    <property type="match status" value="1"/>
</dbReference>
<dbReference type="Gene3D" id="1.25.40.10">
    <property type="entry name" value="Tetratricopeptide repeat domain"/>
    <property type="match status" value="4"/>
</dbReference>
<dbReference type="InterPro" id="IPR032867">
    <property type="entry name" value="DYW_dom"/>
</dbReference>
<dbReference type="InterPro" id="IPR046848">
    <property type="entry name" value="E_motif"/>
</dbReference>
<dbReference type="InterPro" id="IPR002885">
    <property type="entry name" value="Pentatricopeptide_rpt"/>
</dbReference>
<dbReference type="InterPro" id="IPR046960">
    <property type="entry name" value="PPR_At4g14850-like_plant"/>
</dbReference>
<dbReference type="InterPro" id="IPR011990">
    <property type="entry name" value="TPR-like_helical_dom_sf"/>
</dbReference>
<dbReference type="NCBIfam" id="TIGR00756">
    <property type="entry name" value="PPR"/>
    <property type="match status" value="3"/>
</dbReference>
<dbReference type="PANTHER" id="PTHR47926">
    <property type="entry name" value="PENTATRICOPEPTIDE REPEAT-CONTAINING PROTEIN"/>
    <property type="match status" value="1"/>
</dbReference>
<dbReference type="PANTHER" id="PTHR47926:SF500">
    <property type="entry name" value="REPEAT-CONTAINING PROTEIN, PUTATIVE-RELATED"/>
    <property type="match status" value="1"/>
</dbReference>
<dbReference type="Pfam" id="PF14432">
    <property type="entry name" value="DYW_deaminase"/>
    <property type="match status" value="1"/>
</dbReference>
<dbReference type="Pfam" id="PF20431">
    <property type="entry name" value="E_motif"/>
    <property type="match status" value="1"/>
</dbReference>
<dbReference type="Pfam" id="PF01535">
    <property type="entry name" value="PPR"/>
    <property type="match status" value="5"/>
</dbReference>
<dbReference type="Pfam" id="PF12854">
    <property type="entry name" value="PPR_1"/>
    <property type="match status" value="1"/>
</dbReference>
<dbReference type="Pfam" id="PF13041">
    <property type="entry name" value="PPR_2"/>
    <property type="match status" value="1"/>
</dbReference>
<dbReference type="PROSITE" id="PS51375">
    <property type="entry name" value="PPR"/>
    <property type="match status" value="10"/>
</dbReference>
<name>PP258_ARATH</name>
<accession>Q9LW32</accession>
<accession>Q0WR18</accession>
<evidence type="ECO:0000255" key="1"/>
<evidence type="ECO:0000305" key="2"/>
<proteinExistence type="evidence at transcript level"/>
<feature type="transit peptide" description="Mitochondrion" evidence="1">
    <location>
        <begin position="1"/>
        <end position="24"/>
    </location>
</feature>
<feature type="chain" id="PRO_0000356117" description="Pentatricopeptide repeat-containing protein At3g26782, mitochondrial">
    <location>
        <begin position="25"/>
        <end position="659"/>
    </location>
</feature>
<feature type="repeat" description="PPR 1">
    <location>
        <begin position="40"/>
        <end position="74"/>
    </location>
</feature>
<feature type="repeat" description="PPR 2">
    <location>
        <begin position="75"/>
        <end position="109"/>
    </location>
</feature>
<feature type="repeat" description="PPR 3">
    <location>
        <begin position="110"/>
        <end position="144"/>
    </location>
</feature>
<feature type="repeat" description="PPR 4">
    <location>
        <begin position="145"/>
        <end position="171"/>
    </location>
</feature>
<feature type="repeat" description="PPR 5">
    <location>
        <begin position="182"/>
        <end position="216"/>
    </location>
</feature>
<feature type="repeat" description="PPR 6">
    <location>
        <begin position="217"/>
        <end position="249"/>
    </location>
</feature>
<feature type="repeat" description="PPR 7">
    <location>
        <begin position="250"/>
        <end position="284"/>
    </location>
</feature>
<feature type="repeat" description="PPR 8">
    <location>
        <begin position="286"/>
        <end position="320"/>
    </location>
</feature>
<feature type="repeat" description="PPR 9">
    <location>
        <begin position="321"/>
        <end position="351"/>
    </location>
</feature>
<feature type="repeat" description="PPR 10">
    <location>
        <begin position="352"/>
        <end position="386"/>
    </location>
</feature>
<feature type="repeat" description="PPR 11">
    <location>
        <begin position="387"/>
        <end position="422"/>
    </location>
</feature>
<feature type="repeat" description="PPR 12">
    <location>
        <begin position="423"/>
        <end position="453"/>
    </location>
</feature>
<feature type="region of interest" description="Type E motif">
    <location>
        <begin position="458"/>
        <end position="533"/>
    </location>
</feature>
<feature type="region of interest" description="Type E(+) motif">
    <location>
        <begin position="534"/>
        <end position="564"/>
    </location>
</feature>
<feature type="region of interest" description="Type DYW motif">
    <location>
        <begin position="565"/>
        <end position="659"/>
    </location>
</feature>
<feature type="sequence conflict" description="In Ref. 3; BAF00431." evidence="2" ref="3">
    <original>N</original>
    <variation>D</variation>
    <location>
        <position position="141"/>
    </location>
</feature>
<reference key="1">
    <citation type="journal article" date="2000" name="DNA Res.">
        <title>Structural analysis of Arabidopsis thaliana chromosome 3. I. Sequence features of the regions of 4,504,864 bp covered by sixty P1 and TAC clones.</title>
        <authorList>
            <person name="Sato S."/>
            <person name="Nakamura Y."/>
            <person name="Kaneko T."/>
            <person name="Katoh T."/>
            <person name="Asamizu E."/>
            <person name="Tabata S."/>
        </authorList>
    </citation>
    <scope>NUCLEOTIDE SEQUENCE [LARGE SCALE GENOMIC DNA]</scope>
    <source>
        <strain>cv. Columbia</strain>
    </source>
</reference>
<reference key="2">
    <citation type="journal article" date="2017" name="Plant J.">
        <title>Araport11: a complete reannotation of the Arabidopsis thaliana reference genome.</title>
        <authorList>
            <person name="Cheng C.Y."/>
            <person name="Krishnakumar V."/>
            <person name="Chan A.P."/>
            <person name="Thibaud-Nissen F."/>
            <person name="Schobel S."/>
            <person name="Town C.D."/>
        </authorList>
    </citation>
    <scope>GENOME REANNOTATION</scope>
    <source>
        <strain>cv. Columbia</strain>
    </source>
</reference>
<reference key="3">
    <citation type="submission" date="2006-07" db="EMBL/GenBank/DDBJ databases">
        <title>Large-scale analysis of RIKEN Arabidopsis full-length (RAFL) cDNAs.</title>
        <authorList>
            <person name="Totoki Y."/>
            <person name="Seki M."/>
            <person name="Ishida J."/>
            <person name="Nakajima M."/>
            <person name="Enju A."/>
            <person name="Kamiya A."/>
            <person name="Narusaka M."/>
            <person name="Shin-i T."/>
            <person name="Nakagawa M."/>
            <person name="Sakamoto N."/>
            <person name="Oishi K."/>
            <person name="Kohara Y."/>
            <person name="Kobayashi M."/>
            <person name="Toyoda A."/>
            <person name="Sakaki Y."/>
            <person name="Sakurai T."/>
            <person name="Iida K."/>
            <person name="Akiyama K."/>
            <person name="Satou M."/>
            <person name="Toyoda T."/>
            <person name="Konagaya A."/>
            <person name="Carninci P."/>
            <person name="Kawai J."/>
            <person name="Hayashizaki Y."/>
            <person name="Shinozaki K."/>
        </authorList>
    </citation>
    <scope>NUCLEOTIDE SEQUENCE [LARGE SCALE MRNA]</scope>
    <source>
        <strain>cv. Columbia</strain>
    </source>
</reference>
<reference key="4">
    <citation type="journal article" date="2000" name="Plant Mol. Biol.">
        <title>In Arabidopsis thaliana, 1% of the genome codes for a novel protein family unique to plants.</title>
        <authorList>
            <person name="Aubourg S."/>
            <person name="Boudet N."/>
            <person name="Kreis M."/>
            <person name="Lecharny A."/>
        </authorList>
    </citation>
    <scope>GENE FAMILY</scope>
</reference>
<reference key="5">
    <citation type="journal article" date="2004" name="Plant Cell">
        <title>Genome-wide analysis of Arabidopsis pentatricopeptide repeat proteins reveals their essential role in organelle biogenesis.</title>
        <authorList>
            <person name="Lurin C."/>
            <person name="Andres C."/>
            <person name="Aubourg S."/>
            <person name="Bellaoui M."/>
            <person name="Bitton F."/>
            <person name="Bruyere C."/>
            <person name="Caboche M."/>
            <person name="Debast C."/>
            <person name="Gualberto J."/>
            <person name="Hoffmann B."/>
            <person name="Lecharny A."/>
            <person name="Le Ret M."/>
            <person name="Martin-Magniette M.-L."/>
            <person name="Mireau H."/>
            <person name="Peeters N."/>
            <person name="Renou J.-P."/>
            <person name="Szurek B."/>
            <person name="Taconnat L."/>
            <person name="Small I."/>
        </authorList>
    </citation>
    <scope>GENE FAMILY</scope>
</reference>
<comment type="subcellular location">
    <subcellularLocation>
        <location evidence="2">Mitochondrion</location>
    </subcellularLocation>
</comment>
<comment type="similarity">
    <text evidence="2">Belongs to the PPR family. PCMP-H subfamily.</text>
</comment>
<comment type="online information" name="Pentatricopeptide repeat proteins">
    <link uri="https://ppr.plantenergy.uwa.edu.au"/>
</comment>
<keyword id="KW-0496">Mitochondrion</keyword>
<keyword id="KW-1185">Reference proteome</keyword>
<keyword id="KW-0677">Repeat</keyword>
<keyword id="KW-0809">Transit peptide</keyword>